<organism>
    <name type="scientific">Neisseria meningitidis serogroup A / serotype 4A (strain DSM 15465 / Z2491)</name>
    <dbReference type="NCBI Taxonomy" id="122587"/>
    <lineage>
        <taxon>Bacteria</taxon>
        <taxon>Pseudomonadati</taxon>
        <taxon>Pseudomonadota</taxon>
        <taxon>Betaproteobacteria</taxon>
        <taxon>Neisseriales</taxon>
        <taxon>Neisseriaceae</taxon>
        <taxon>Neisseria</taxon>
    </lineage>
</organism>
<gene>
    <name evidence="1" type="primary">efp</name>
    <name type="ordered locus">NMA1133</name>
</gene>
<reference key="1">
    <citation type="journal article" date="2000" name="Nature">
        <title>Complete DNA sequence of a serogroup A strain of Neisseria meningitidis Z2491.</title>
        <authorList>
            <person name="Parkhill J."/>
            <person name="Achtman M."/>
            <person name="James K.D."/>
            <person name="Bentley S.D."/>
            <person name="Churcher C.M."/>
            <person name="Klee S.R."/>
            <person name="Morelli G."/>
            <person name="Basham D."/>
            <person name="Brown D."/>
            <person name="Chillingworth T."/>
            <person name="Davies R.M."/>
            <person name="Davis P."/>
            <person name="Devlin K."/>
            <person name="Feltwell T."/>
            <person name="Hamlin N."/>
            <person name="Holroyd S."/>
            <person name="Jagels K."/>
            <person name="Leather S."/>
            <person name="Moule S."/>
            <person name="Mungall K.L."/>
            <person name="Quail M.A."/>
            <person name="Rajandream M.A."/>
            <person name="Rutherford K.M."/>
            <person name="Simmonds M."/>
            <person name="Skelton J."/>
            <person name="Whitehead S."/>
            <person name="Spratt B.G."/>
            <person name="Barrell B.G."/>
        </authorList>
    </citation>
    <scope>NUCLEOTIDE SEQUENCE [LARGE SCALE GENOMIC DNA]</scope>
    <source>
        <strain>DSM 15465 / Z2491</strain>
    </source>
</reference>
<name>EFP_NEIMA</name>
<sequence length="186" mass="20894">MKTAQELRAGNVFMVGNDPMVVQKTEYIKGGRSSAKVSMKLKNLLTGAASETIYKADDKFDVVILSRKNCTYSYFADPMYVFMDEEFNQYEIEADNIGDALKFIVDGMEDQCEVTFYEGNPISVELPTIIVREVEYTEPAVKGDTSGKVMKTARLVGGTEIQVMSYIENGDKIEIDTRTGEFRKRA</sequence>
<dbReference type="EMBL" id="AL157959">
    <property type="protein sequence ID" value="CAM08339.1"/>
    <property type="molecule type" value="Genomic_DNA"/>
</dbReference>
<dbReference type="RefSeq" id="WP_002213793.1">
    <property type="nucleotide sequence ID" value="NC_003116.1"/>
</dbReference>
<dbReference type="SMR" id="Q9JUU2"/>
<dbReference type="EnsemblBacteria" id="CAM08339">
    <property type="protein sequence ID" value="CAM08339"/>
    <property type="gene ID" value="NMA1133"/>
</dbReference>
<dbReference type="GeneID" id="93386255"/>
<dbReference type="KEGG" id="nma:NMA1133"/>
<dbReference type="HOGENOM" id="CLU_074944_2_1_4"/>
<dbReference type="UniPathway" id="UPA00345"/>
<dbReference type="Proteomes" id="UP000000626">
    <property type="component" value="Chromosome"/>
</dbReference>
<dbReference type="GO" id="GO:0005737">
    <property type="term" value="C:cytoplasm"/>
    <property type="evidence" value="ECO:0007669"/>
    <property type="project" value="UniProtKB-SubCell"/>
</dbReference>
<dbReference type="GO" id="GO:0003746">
    <property type="term" value="F:translation elongation factor activity"/>
    <property type="evidence" value="ECO:0007669"/>
    <property type="project" value="UniProtKB-UniRule"/>
</dbReference>
<dbReference type="GO" id="GO:0043043">
    <property type="term" value="P:peptide biosynthetic process"/>
    <property type="evidence" value="ECO:0007669"/>
    <property type="project" value="InterPro"/>
</dbReference>
<dbReference type="CDD" id="cd04470">
    <property type="entry name" value="S1_EF-P_repeat_1"/>
    <property type="match status" value="1"/>
</dbReference>
<dbReference type="CDD" id="cd05794">
    <property type="entry name" value="S1_EF-P_repeat_2"/>
    <property type="match status" value="1"/>
</dbReference>
<dbReference type="FunFam" id="2.30.30.30:FF:000003">
    <property type="entry name" value="Elongation factor P"/>
    <property type="match status" value="1"/>
</dbReference>
<dbReference type="FunFam" id="2.40.50.140:FF:000004">
    <property type="entry name" value="Elongation factor P"/>
    <property type="match status" value="1"/>
</dbReference>
<dbReference type="FunFam" id="2.40.50.140:FF:000009">
    <property type="entry name" value="Elongation factor P"/>
    <property type="match status" value="1"/>
</dbReference>
<dbReference type="Gene3D" id="2.30.30.30">
    <property type="match status" value="1"/>
</dbReference>
<dbReference type="Gene3D" id="2.40.50.140">
    <property type="entry name" value="Nucleic acid-binding proteins"/>
    <property type="match status" value="2"/>
</dbReference>
<dbReference type="HAMAP" id="MF_00141">
    <property type="entry name" value="EF_P"/>
    <property type="match status" value="1"/>
</dbReference>
<dbReference type="InterPro" id="IPR015365">
    <property type="entry name" value="Elong-fact-P_C"/>
</dbReference>
<dbReference type="InterPro" id="IPR012340">
    <property type="entry name" value="NA-bd_OB-fold"/>
</dbReference>
<dbReference type="InterPro" id="IPR014722">
    <property type="entry name" value="Rib_uL2_dom2"/>
</dbReference>
<dbReference type="InterPro" id="IPR020599">
    <property type="entry name" value="Transl_elong_fac_P/YeiP"/>
</dbReference>
<dbReference type="InterPro" id="IPR013185">
    <property type="entry name" value="Transl_elong_KOW-like"/>
</dbReference>
<dbReference type="InterPro" id="IPR001059">
    <property type="entry name" value="Transl_elong_P/YeiP_cen"/>
</dbReference>
<dbReference type="InterPro" id="IPR011768">
    <property type="entry name" value="Transl_elongation_fac_P"/>
</dbReference>
<dbReference type="InterPro" id="IPR008991">
    <property type="entry name" value="Translation_prot_SH3-like_sf"/>
</dbReference>
<dbReference type="NCBIfam" id="TIGR00038">
    <property type="entry name" value="efp"/>
    <property type="match status" value="1"/>
</dbReference>
<dbReference type="NCBIfam" id="NF001810">
    <property type="entry name" value="PRK00529.1"/>
    <property type="match status" value="1"/>
</dbReference>
<dbReference type="PANTHER" id="PTHR30053">
    <property type="entry name" value="ELONGATION FACTOR P"/>
    <property type="match status" value="1"/>
</dbReference>
<dbReference type="PANTHER" id="PTHR30053:SF12">
    <property type="entry name" value="ELONGATION FACTOR P (EF-P) FAMILY PROTEIN"/>
    <property type="match status" value="1"/>
</dbReference>
<dbReference type="Pfam" id="PF01132">
    <property type="entry name" value="EFP"/>
    <property type="match status" value="1"/>
</dbReference>
<dbReference type="Pfam" id="PF08207">
    <property type="entry name" value="EFP_N"/>
    <property type="match status" value="1"/>
</dbReference>
<dbReference type="Pfam" id="PF09285">
    <property type="entry name" value="Elong-fact-P_C"/>
    <property type="match status" value="1"/>
</dbReference>
<dbReference type="PIRSF" id="PIRSF005901">
    <property type="entry name" value="EF-P"/>
    <property type="match status" value="1"/>
</dbReference>
<dbReference type="SMART" id="SM01185">
    <property type="entry name" value="EFP"/>
    <property type="match status" value="1"/>
</dbReference>
<dbReference type="SMART" id="SM00841">
    <property type="entry name" value="Elong-fact-P_C"/>
    <property type="match status" value="1"/>
</dbReference>
<dbReference type="SUPFAM" id="SSF50249">
    <property type="entry name" value="Nucleic acid-binding proteins"/>
    <property type="match status" value="2"/>
</dbReference>
<dbReference type="SUPFAM" id="SSF50104">
    <property type="entry name" value="Translation proteins SH3-like domain"/>
    <property type="match status" value="1"/>
</dbReference>
<proteinExistence type="inferred from homology"/>
<comment type="function">
    <text evidence="1">Involved in peptide bond synthesis. Stimulates efficient translation and peptide-bond synthesis on native or reconstituted 70S ribosomes in vitro. Probably functions indirectly by altering the affinity of the ribosome for aminoacyl-tRNA, thus increasing their reactivity as acceptors for peptidyl transferase.</text>
</comment>
<comment type="pathway">
    <text evidence="1">Protein biosynthesis; polypeptide chain elongation.</text>
</comment>
<comment type="subcellular location">
    <subcellularLocation>
        <location evidence="1">Cytoplasm</location>
    </subcellularLocation>
</comment>
<comment type="similarity">
    <text evidence="1">Belongs to the elongation factor P family.</text>
</comment>
<protein>
    <recommendedName>
        <fullName evidence="1">Elongation factor P</fullName>
        <shortName evidence="1">EF-P</shortName>
    </recommendedName>
</protein>
<evidence type="ECO:0000255" key="1">
    <source>
        <dbReference type="HAMAP-Rule" id="MF_00141"/>
    </source>
</evidence>
<feature type="chain" id="PRO_0000094294" description="Elongation factor P">
    <location>
        <begin position="1"/>
        <end position="186"/>
    </location>
</feature>
<accession>Q9JUU2</accession>
<accession>A1IRF3</accession>
<keyword id="KW-0963">Cytoplasm</keyword>
<keyword id="KW-0251">Elongation factor</keyword>
<keyword id="KW-0648">Protein biosynthesis</keyword>